<name>Y1607_PSEP7</name>
<accession>A6V1Q6</accession>
<comment type="similarity">
    <text evidence="1">Belongs to the UPF0246 family.</text>
</comment>
<gene>
    <name type="ordered locus">PSPA7_1607</name>
</gene>
<protein>
    <recommendedName>
        <fullName evidence="1">UPF0246 protein PSPA7_1607</fullName>
    </recommendedName>
</protein>
<sequence>MLMVISPAKTLDYETPPVTQRFTQPQYLDHSQELIQQLRQLTPLQISELMKLSDKLAGLNAARYASWHPDFTPQNAKQALLAFKGDVYTGLDAESFSEDDFAFAQEHLRMLSGLYGVLRPLDLMQPYRLEMGTRLANARGKDLYAFWGERISQWLNEALAAQGDDVLLNLASNEYFGAVKRKALQARIIDTEFKDLKNGQYKIISFYAKKARGMMARYVVRERLRDPAGLKDFNAHGYYFSAEQSGPEQLVFLRDAPQD</sequence>
<feature type="chain" id="PRO_1000061621" description="UPF0246 protein PSPA7_1607">
    <location>
        <begin position="1"/>
        <end position="259"/>
    </location>
</feature>
<proteinExistence type="inferred from homology"/>
<dbReference type="EMBL" id="CP000744">
    <property type="protein sequence ID" value="ABR86005.1"/>
    <property type="molecule type" value="Genomic_DNA"/>
</dbReference>
<dbReference type="RefSeq" id="WP_012074773.1">
    <property type="nucleotide sequence ID" value="NC_009656.1"/>
</dbReference>
<dbReference type="SMR" id="A6V1Q6"/>
<dbReference type="KEGG" id="pap:PSPA7_1607"/>
<dbReference type="HOGENOM" id="CLU_061989_0_0_6"/>
<dbReference type="Proteomes" id="UP000001582">
    <property type="component" value="Chromosome"/>
</dbReference>
<dbReference type="GO" id="GO:0005829">
    <property type="term" value="C:cytosol"/>
    <property type="evidence" value="ECO:0007669"/>
    <property type="project" value="TreeGrafter"/>
</dbReference>
<dbReference type="GO" id="GO:0033194">
    <property type="term" value="P:response to hydroperoxide"/>
    <property type="evidence" value="ECO:0007669"/>
    <property type="project" value="TreeGrafter"/>
</dbReference>
<dbReference type="HAMAP" id="MF_00652">
    <property type="entry name" value="UPF0246"/>
    <property type="match status" value="1"/>
</dbReference>
<dbReference type="InterPro" id="IPR005583">
    <property type="entry name" value="YaaA"/>
</dbReference>
<dbReference type="NCBIfam" id="NF002541">
    <property type="entry name" value="PRK02101.1-1"/>
    <property type="match status" value="1"/>
</dbReference>
<dbReference type="NCBIfam" id="NF002542">
    <property type="entry name" value="PRK02101.1-3"/>
    <property type="match status" value="1"/>
</dbReference>
<dbReference type="PANTHER" id="PTHR30283:SF4">
    <property type="entry name" value="PEROXIDE STRESS RESISTANCE PROTEIN YAAA"/>
    <property type="match status" value="1"/>
</dbReference>
<dbReference type="PANTHER" id="PTHR30283">
    <property type="entry name" value="PEROXIDE STRESS RESPONSE PROTEIN YAAA"/>
    <property type="match status" value="1"/>
</dbReference>
<dbReference type="Pfam" id="PF03883">
    <property type="entry name" value="H2O2_YaaD"/>
    <property type="match status" value="1"/>
</dbReference>
<reference key="1">
    <citation type="submission" date="2007-06" db="EMBL/GenBank/DDBJ databases">
        <authorList>
            <person name="Dodson R.J."/>
            <person name="Harkins D."/>
            <person name="Paulsen I.T."/>
        </authorList>
    </citation>
    <scope>NUCLEOTIDE SEQUENCE [LARGE SCALE GENOMIC DNA]</scope>
    <source>
        <strain>DSM 24068 / PA7</strain>
    </source>
</reference>
<organism>
    <name type="scientific">Pseudomonas paraeruginosa (strain DSM 24068 / PA7)</name>
    <name type="common">Pseudomonas aeruginosa (strain PA7)</name>
    <dbReference type="NCBI Taxonomy" id="381754"/>
    <lineage>
        <taxon>Bacteria</taxon>
        <taxon>Pseudomonadati</taxon>
        <taxon>Pseudomonadota</taxon>
        <taxon>Gammaproteobacteria</taxon>
        <taxon>Pseudomonadales</taxon>
        <taxon>Pseudomonadaceae</taxon>
        <taxon>Pseudomonas</taxon>
        <taxon>Pseudomonas paraeruginosa</taxon>
    </lineage>
</organism>
<evidence type="ECO:0000255" key="1">
    <source>
        <dbReference type="HAMAP-Rule" id="MF_00652"/>
    </source>
</evidence>